<comment type="function">
    <text evidence="1">Mediates responses to nitric oxide (NO) by catalyzing the biosynthesis of the signaling molecule cGMP.</text>
</comment>
<comment type="catalytic activity">
    <reaction evidence="2">
        <text>GTP = 3',5'-cyclic GMP + diphosphate</text>
        <dbReference type="Rhea" id="RHEA:13665"/>
        <dbReference type="ChEBI" id="CHEBI:33019"/>
        <dbReference type="ChEBI" id="CHEBI:37565"/>
        <dbReference type="ChEBI" id="CHEBI:57746"/>
        <dbReference type="EC" id="4.6.1.2"/>
    </reaction>
</comment>
<comment type="cofactor">
    <cofactor evidence="1">
        <name>heme</name>
        <dbReference type="ChEBI" id="CHEBI:30413"/>
    </cofactor>
    <text evidence="1">Binds 1 or 2 heme groups per heterodimer. Heme is required for responding to nitric oxide, but not for catalytic activity.</text>
</comment>
<comment type="activity regulation">
    <text evidence="2">Activated by nitric oxide in the presence of magnesium or manganese ions.</text>
</comment>
<comment type="subunit">
    <text evidence="2">The active enzyme is formed by a heterodimer of an alpha and a beta subunit. Heterodimer with GUCY1A1. Can also form inactive homodimers in vitro.</text>
</comment>
<comment type="subcellular location">
    <subcellularLocation>
        <location evidence="1">Cytoplasm</location>
    </subcellularLocation>
</comment>
<comment type="miscellaneous">
    <text>There are two types of guanylate cyclases: soluble forms and membrane-associated receptor forms.</text>
</comment>
<comment type="similarity">
    <text evidence="3">Belongs to the adenylyl cyclase class-4/guanylyl cyclase family.</text>
</comment>
<accession>O54865</accession>
<gene>
    <name type="primary">Gucy1b1</name>
    <name type="synonym">Gucy1b3</name>
</gene>
<keyword id="KW-0141">cGMP biosynthesis</keyword>
<keyword id="KW-0963">Cytoplasm</keyword>
<keyword id="KW-0342">GTP-binding</keyword>
<keyword id="KW-0349">Heme</keyword>
<keyword id="KW-0408">Iron</keyword>
<keyword id="KW-0456">Lyase</keyword>
<keyword id="KW-0479">Metal-binding</keyword>
<keyword id="KW-0547">Nucleotide-binding</keyword>
<keyword id="KW-1185">Reference proteome</keyword>
<evidence type="ECO:0000250" key="1">
    <source>
        <dbReference type="UniProtKB" id="P16068"/>
    </source>
</evidence>
<evidence type="ECO:0000250" key="2">
    <source>
        <dbReference type="UniProtKB" id="Q02153"/>
    </source>
</evidence>
<evidence type="ECO:0000255" key="3">
    <source>
        <dbReference type="PROSITE-ProRule" id="PRU00099"/>
    </source>
</evidence>
<protein>
    <recommendedName>
        <fullName>Guanylate cyclase soluble subunit beta-1</fullName>
        <shortName>GCS-beta-1</shortName>
        <ecNumber evidence="2">4.6.1.2</ecNumber>
    </recommendedName>
    <alternativeName>
        <fullName>Guanylate cyclase soluble subunit beta-3</fullName>
        <shortName>GCS-beta-3</shortName>
    </alternativeName>
    <alternativeName>
        <fullName>Soluble guanylate cyclase small subunit</fullName>
    </alternativeName>
</protein>
<dbReference type="EC" id="4.6.1.2" evidence="2"/>
<dbReference type="EMBL" id="AF020339">
    <property type="protein sequence ID" value="AAB94876.1"/>
    <property type="molecule type" value="mRNA"/>
</dbReference>
<dbReference type="EMBL" id="AF297083">
    <property type="protein sequence ID" value="AAG17447.1"/>
    <property type="molecule type" value="mRNA"/>
</dbReference>
<dbReference type="CCDS" id="CCDS38460.1"/>
<dbReference type="RefSeq" id="NP_059497.1">
    <property type="nucleotide sequence ID" value="NM_017469.4"/>
</dbReference>
<dbReference type="SMR" id="O54865"/>
<dbReference type="BioGRID" id="207595">
    <property type="interactions" value="13"/>
</dbReference>
<dbReference type="CORUM" id="O54865"/>
<dbReference type="FunCoup" id="O54865">
    <property type="interactions" value="483"/>
</dbReference>
<dbReference type="IntAct" id="O54865">
    <property type="interactions" value="2"/>
</dbReference>
<dbReference type="MINT" id="O54865"/>
<dbReference type="STRING" id="10090.ENSMUSP00000029635"/>
<dbReference type="GlyGen" id="O54865">
    <property type="glycosylation" value="3 sites, 2 N-linked glycans (3 sites)"/>
</dbReference>
<dbReference type="iPTMnet" id="O54865"/>
<dbReference type="PhosphoSitePlus" id="O54865"/>
<dbReference type="SwissPalm" id="O54865"/>
<dbReference type="jPOST" id="O54865"/>
<dbReference type="PaxDb" id="10090-ENSMUSP00000029635"/>
<dbReference type="PeptideAtlas" id="O54865"/>
<dbReference type="ProteomicsDB" id="273034"/>
<dbReference type="Antibodypedia" id="4395">
    <property type="antibodies" value="290 antibodies from 36 providers"/>
</dbReference>
<dbReference type="DNASU" id="54195"/>
<dbReference type="Ensembl" id="ENSMUST00000029635.14">
    <property type="protein sequence ID" value="ENSMUSP00000029635.9"/>
    <property type="gene ID" value="ENSMUSG00000028005.14"/>
</dbReference>
<dbReference type="GeneID" id="54195"/>
<dbReference type="KEGG" id="mmu:54195"/>
<dbReference type="UCSC" id="uc008por.2">
    <property type="organism name" value="mouse"/>
</dbReference>
<dbReference type="AGR" id="MGI:1860604"/>
<dbReference type="CTD" id="2983"/>
<dbReference type="MGI" id="MGI:1860604">
    <property type="gene designation" value="Gucy1b1"/>
</dbReference>
<dbReference type="VEuPathDB" id="HostDB:ENSMUSG00000028005"/>
<dbReference type="eggNOG" id="KOG4171">
    <property type="taxonomic scope" value="Eukaryota"/>
</dbReference>
<dbReference type="GeneTree" id="ENSGT00940000157483"/>
<dbReference type="HOGENOM" id="CLU_011614_4_0_1"/>
<dbReference type="InParanoid" id="O54865"/>
<dbReference type="OMA" id="SHARCIG"/>
<dbReference type="OrthoDB" id="6127067at2759"/>
<dbReference type="PhylomeDB" id="O54865"/>
<dbReference type="TreeFam" id="TF351403"/>
<dbReference type="Reactome" id="R-MMU-445355">
    <property type="pathway name" value="Smooth Muscle Contraction"/>
</dbReference>
<dbReference type="BioGRID-ORCS" id="54195">
    <property type="hits" value="1 hit in 76 CRISPR screens"/>
</dbReference>
<dbReference type="CD-CODE" id="CE726F99">
    <property type="entry name" value="Postsynaptic density"/>
</dbReference>
<dbReference type="ChiTaRS" id="Gucy1b1">
    <property type="organism name" value="mouse"/>
</dbReference>
<dbReference type="PRO" id="PR:O54865"/>
<dbReference type="Proteomes" id="UP000000589">
    <property type="component" value="Chromosome 3"/>
</dbReference>
<dbReference type="RNAct" id="O54865">
    <property type="molecule type" value="protein"/>
</dbReference>
<dbReference type="Bgee" id="ENSMUSG00000028005">
    <property type="expression patterns" value="Expressed in olfactory tubercle and 258 other cell types or tissues"/>
</dbReference>
<dbReference type="ExpressionAtlas" id="O54865">
    <property type="expression patterns" value="baseline and differential"/>
</dbReference>
<dbReference type="GO" id="GO:0005737">
    <property type="term" value="C:cytoplasm"/>
    <property type="evidence" value="ECO:0000250"/>
    <property type="project" value="UniProtKB"/>
</dbReference>
<dbReference type="GO" id="GO:0098978">
    <property type="term" value="C:glutamatergic synapse"/>
    <property type="evidence" value="ECO:0007669"/>
    <property type="project" value="Ensembl"/>
</dbReference>
<dbReference type="GO" id="GO:0008074">
    <property type="term" value="C:guanylate cyclase complex, soluble"/>
    <property type="evidence" value="ECO:0000250"/>
    <property type="project" value="UniProtKB"/>
</dbReference>
<dbReference type="GO" id="GO:0098831">
    <property type="term" value="C:presynaptic active zone cytoplasmic component"/>
    <property type="evidence" value="ECO:0007669"/>
    <property type="project" value="Ensembl"/>
</dbReference>
<dbReference type="GO" id="GO:0004016">
    <property type="term" value="F:adenylate cyclase activity"/>
    <property type="evidence" value="ECO:0007669"/>
    <property type="project" value="Ensembl"/>
</dbReference>
<dbReference type="GO" id="GO:0047805">
    <property type="term" value="F:cytidylate cyclase activity"/>
    <property type="evidence" value="ECO:0007669"/>
    <property type="project" value="Ensembl"/>
</dbReference>
<dbReference type="GO" id="GO:0005525">
    <property type="term" value="F:GTP binding"/>
    <property type="evidence" value="ECO:0007669"/>
    <property type="project" value="UniProtKB-KW"/>
</dbReference>
<dbReference type="GO" id="GO:0004383">
    <property type="term" value="F:guanylate cyclase activity"/>
    <property type="evidence" value="ECO:0000250"/>
    <property type="project" value="UniProtKB"/>
</dbReference>
<dbReference type="GO" id="GO:0020037">
    <property type="term" value="F:heme binding"/>
    <property type="evidence" value="ECO:0000250"/>
    <property type="project" value="UniProtKB"/>
</dbReference>
<dbReference type="GO" id="GO:0051879">
    <property type="term" value="F:Hsp90 protein binding"/>
    <property type="evidence" value="ECO:0007669"/>
    <property type="project" value="Ensembl"/>
</dbReference>
<dbReference type="GO" id="GO:0046872">
    <property type="term" value="F:metal ion binding"/>
    <property type="evidence" value="ECO:0007669"/>
    <property type="project" value="UniProtKB-KW"/>
</dbReference>
<dbReference type="GO" id="GO:0070026">
    <property type="term" value="F:nitric oxide binding"/>
    <property type="evidence" value="ECO:0007669"/>
    <property type="project" value="Ensembl"/>
</dbReference>
<dbReference type="GO" id="GO:0044877">
    <property type="term" value="F:protein-containing complex binding"/>
    <property type="evidence" value="ECO:0007669"/>
    <property type="project" value="Ensembl"/>
</dbReference>
<dbReference type="GO" id="GO:0071732">
    <property type="term" value="P:cellular response to nitric oxide"/>
    <property type="evidence" value="ECO:0000250"/>
    <property type="project" value="UniProtKB"/>
</dbReference>
<dbReference type="GO" id="GO:0006182">
    <property type="term" value="P:cGMP biosynthetic process"/>
    <property type="evidence" value="ECO:0000250"/>
    <property type="project" value="UniProtKB"/>
</dbReference>
<dbReference type="GO" id="GO:0038060">
    <property type="term" value="P:nitric oxide-cGMP-mediated signaling"/>
    <property type="evidence" value="ECO:0000250"/>
    <property type="project" value="UniProtKB"/>
</dbReference>
<dbReference type="CDD" id="cd07302">
    <property type="entry name" value="CHD"/>
    <property type="match status" value="1"/>
</dbReference>
<dbReference type="FunFam" id="3.30.70.1230:FF:000005">
    <property type="entry name" value="Guanylate cyclase soluble subunit beta-1"/>
    <property type="match status" value="1"/>
</dbReference>
<dbReference type="FunFam" id="3.90.1520.10:FF:000001">
    <property type="entry name" value="Guanylate cyclase soluble subunit beta-1"/>
    <property type="match status" value="1"/>
</dbReference>
<dbReference type="FunFam" id="3.30.450.260:FF:000001">
    <property type="entry name" value="guanylate cyclase soluble subunit beta-1 isoform X1"/>
    <property type="match status" value="1"/>
</dbReference>
<dbReference type="Gene3D" id="6.10.250.780">
    <property type="match status" value="1"/>
</dbReference>
<dbReference type="Gene3D" id="3.90.1520.10">
    <property type="entry name" value="H-NOX domain"/>
    <property type="match status" value="1"/>
</dbReference>
<dbReference type="Gene3D" id="3.30.450.260">
    <property type="entry name" value="Haem NO binding associated domain"/>
    <property type="match status" value="1"/>
</dbReference>
<dbReference type="Gene3D" id="3.30.70.1230">
    <property type="entry name" value="Nucleotide cyclase"/>
    <property type="match status" value="1"/>
</dbReference>
<dbReference type="InterPro" id="IPR001054">
    <property type="entry name" value="A/G_cyclase"/>
</dbReference>
<dbReference type="InterPro" id="IPR018297">
    <property type="entry name" value="A/G_cyclase_CS"/>
</dbReference>
<dbReference type="InterPro" id="IPR038158">
    <property type="entry name" value="H-NOX_domain_sf"/>
</dbReference>
<dbReference type="InterPro" id="IPR011644">
    <property type="entry name" value="Heme_NO-bd"/>
</dbReference>
<dbReference type="InterPro" id="IPR011645">
    <property type="entry name" value="HNOB_dom_associated"/>
</dbReference>
<dbReference type="InterPro" id="IPR042463">
    <property type="entry name" value="HNOB_dom_associated_sf"/>
</dbReference>
<dbReference type="InterPro" id="IPR024096">
    <property type="entry name" value="NO_sig/Golgi_transp_ligand-bd"/>
</dbReference>
<dbReference type="InterPro" id="IPR029787">
    <property type="entry name" value="Nucleotide_cyclase"/>
</dbReference>
<dbReference type="PANTHER" id="PTHR45655:SF2">
    <property type="entry name" value="GUANYLATE CYCLASE SOLUBLE SUBUNIT BETA-1"/>
    <property type="match status" value="1"/>
</dbReference>
<dbReference type="PANTHER" id="PTHR45655">
    <property type="entry name" value="GUANYLATE CYCLASE SOLUBLE SUBUNIT BETA-2"/>
    <property type="match status" value="1"/>
</dbReference>
<dbReference type="Pfam" id="PF00211">
    <property type="entry name" value="Guanylate_cyc"/>
    <property type="match status" value="1"/>
</dbReference>
<dbReference type="Pfam" id="PF07700">
    <property type="entry name" value="HNOB"/>
    <property type="match status" value="1"/>
</dbReference>
<dbReference type="Pfam" id="PF07701">
    <property type="entry name" value="HNOBA"/>
    <property type="match status" value="1"/>
</dbReference>
<dbReference type="SMART" id="SM00044">
    <property type="entry name" value="CYCc"/>
    <property type="match status" value="1"/>
</dbReference>
<dbReference type="SUPFAM" id="SSF111126">
    <property type="entry name" value="Ligand-binding domain in the NO signalling and Golgi transport"/>
    <property type="match status" value="1"/>
</dbReference>
<dbReference type="SUPFAM" id="SSF55073">
    <property type="entry name" value="Nucleotide cyclase"/>
    <property type="match status" value="1"/>
</dbReference>
<dbReference type="PROSITE" id="PS00452">
    <property type="entry name" value="GUANYLATE_CYCLASE_1"/>
    <property type="match status" value="1"/>
</dbReference>
<dbReference type="PROSITE" id="PS50125">
    <property type="entry name" value="GUANYLATE_CYCLASE_2"/>
    <property type="match status" value="1"/>
</dbReference>
<name>GCYB1_MOUSE</name>
<sequence>MYGFVNHALELLVIRNYGPEVWEDIKKEAQLDEEGQFLVRIIYDDSKTYDLVAAASKVLNLNAGEILQMFGKMFFVFCQESGYDTILRVLGSNVREFLQNLDALHDHLATIYPGMRAPSFRCTDAEKGKGLILHYYSEREGLQDIVIGIIKTVAQQIHGTEIDMKVIQQRNEECDHTQFLIEEKESKEEDFYEDLDRFEENGTQESRISPYTFCKAFPFHIIFDRNLVVTQCGNAIYRVLPQLQPGNCSLLSVFSLVRPHIDISFHGILSHINTVFVLRSKEGLLDVEKLECEDELTGAEISCLRLKGQMIYLPEADSILFLCSPSVMNLDDLTRRGLYLSDIPLHDATRDLVLLGEQFREEYKLTQELEILTDRLQLTLRALEDEKKKTDTLLYSVLPPSVANELRHKRPVPAKRYDNVTILFSGIVGFNAFCSKHASGEGAMKIVNLLNDLYTRFDTLTDSRKNPFVYKVETVGDKYMTVSGLPEPCIHHARSICHLALDMMEIAGQVQVDGESVQITIGIHTGEVVTGVIGQRMPRYCLFGNTVNLTSRTETTGEKGKINVSEYTYRCLMSPENSDPLFHLEHRGPVSMKGKKEPMQVWFLSRKNTGTEETNEEDEN</sequence>
<feature type="chain" id="PRO_0000074117" description="Guanylate cyclase soluble subunit beta-1">
    <location>
        <begin position="1"/>
        <end position="620"/>
    </location>
</feature>
<feature type="domain" description="Guanylate cyclase" evidence="3">
    <location>
        <begin position="421"/>
        <end position="554"/>
    </location>
</feature>
<feature type="binding site" description="proximal binding residue" evidence="1">
    <location>
        <position position="105"/>
    </location>
    <ligand>
        <name>heme</name>
        <dbReference type="ChEBI" id="CHEBI:30413"/>
    </ligand>
    <ligandPart>
        <name>Fe</name>
        <dbReference type="ChEBI" id="CHEBI:18248"/>
    </ligandPart>
</feature>
<proteinExistence type="evidence at protein level"/>
<organism>
    <name type="scientific">Mus musculus</name>
    <name type="common">Mouse</name>
    <dbReference type="NCBI Taxonomy" id="10090"/>
    <lineage>
        <taxon>Eukaryota</taxon>
        <taxon>Metazoa</taxon>
        <taxon>Chordata</taxon>
        <taxon>Craniata</taxon>
        <taxon>Vertebrata</taxon>
        <taxon>Euteleostomi</taxon>
        <taxon>Mammalia</taxon>
        <taxon>Eutheria</taxon>
        <taxon>Euarchontoglires</taxon>
        <taxon>Glires</taxon>
        <taxon>Rodentia</taxon>
        <taxon>Myomorpha</taxon>
        <taxon>Muroidea</taxon>
        <taxon>Muridae</taxon>
        <taxon>Murinae</taxon>
        <taxon>Mus</taxon>
        <taxon>Mus</taxon>
    </lineage>
</organism>
<reference key="1">
    <citation type="submission" date="1997-08" db="EMBL/GenBank/DDBJ databases">
        <title>Murine soluble guanylate cyclase, beta-1 subunit.</title>
        <authorList>
            <person name="Gansemans Y."/>
            <person name="Brouckaert P."/>
            <person name="Fiers W."/>
        </authorList>
    </citation>
    <scope>NUCLEOTIDE SEQUENCE [MRNA]</scope>
    <source>
        <tissue>Lung</tissue>
    </source>
</reference>
<reference key="2">
    <citation type="journal article" date="2000" name="Proc. Natl. Acad. Sci. U.S.A.">
        <title>Genomic organization of alpha 1 and beta 1 subunits of the mammalian soluble guanylyl cyclase genes.</title>
        <authorList>
            <person name="Sharina I.G."/>
            <person name="Krumenacker J.S."/>
            <person name="Martin E."/>
            <person name="Murad F."/>
        </authorList>
    </citation>
    <scope>NUCLEOTIDE SEQUENCE [MRNA]</scope>
    <source>
        <strain>C57BL/10</strain>
    </source>
</reference>
<reference key="3">
    <citation type="journal article" date="2010" name="Cell">
        <title>A tissue-specific atlas of mouse protein phosphorylation and expression.</title>
        <authorList>
            <person name="Huttlin E.L."/>
            <person name="Jedrychowski M.P."/>
            <person name="Elias J.E."/>
            <person name="Goswami T."/>
            <person name="Rad R."/>
            <person name="Beausoleil S.A."/>
            <person name="Villen J."/>
            <person name="Haas W."/>
            <person name="Sowa M.E."/>
            <person name="Gygi S.P."/>
        </authorList>
    </citation>
    <scope>IDENTIFICATION BY MASS SPECTROMETRY [LARGE SCALE ANALYSIS]</scope>
    <source>
        <tissue>Brain</tissue>
        <tissue>Heart</tissue>
        <tissue>Kidney</tissue>
        <tissue>Liver</tissue>
        <tissue>Lung</tissue>
        <tissue>Spleen</tissue>
    </source>
</reference>